<reference key="1">
    <citation type="submission" date="2006-08" db="EMBL/GenBank/DDBJ databases">
        <authorList>
            <consortium name="NIH - Zebrafish Gene Collection (ZGC) project"/>
        </authorList>
    </citation>
    <scope>NUCLEOTIDE SEQUENCE [LARGE SCALE MRNA]</scope>
    <source>
        <tissue>Eye</tissue>
    </source>
</reference>
<keyword id="KW-0963">Cytoplasm</keyword>
<keyword id="KW-0206">Cytoskeleton</keyword>
<keyword id="KW-0650">Protein phosphatase inhibitor</keyword>
<keyword id="KW-1185">Reference proteome</keyword>
<accession>Q0P427</accession>
<evidence type="ECO:0000250" key="1">
    <source>
        <dbReference type="UniProtKB" id="Q8TAP8"/>
    </source>
</evidence>
<evidence type="ECO:0000250" key="2">
    <source>
        <dbReference type="UniProtKB" id="Q9D8C8"/>
    </source>
</evidence>
<evidence type="ECO:0000256" key="3">
    <source>
        <dbReference type="SAM" id="MobiDB-lite"/>
    </source>
</evidence>
<evidence type="ECO:0000305" key="4"/>
<comment type="function">
    <text evidence="1 2">During centriole duplication, may play a role in the centriole elongation by promoting the recruitment of the microtubule-binding elongation machinery, leading to the centriole to centrosome conversion (By similarity). In addition may play a role in the primary cilia assembly (By similarity).</text>
</comment>
<comment type="subcellular location">
    <subcellularLocation>
        <location evidence="1">Cytoplasm</location>
        <location evidence="1">Cytoskeleton</location>
        <location evidence="1">Microtubule organizing center</location>
        <location evidence="1">Centrosome</location>
    </subcellularLocation>
    <subcellularLocation>
        <location evidence="1">Cytoplasm</location>
        <location evidence="1">Cytoskeleton</location>
        <location evidence="1">Microtubule organizing center</location>
        <location evidence="1">Centrosome</location>
        <location evidence="1">Centriole</location>
    </subcellularLocation>
    <text evidence="1">Recruited to the nascent daughter centriole early in the duplication cycle and localizes to the proximal centriolar lumen just above the cartwheel.</text>
</comment>
<comment type="similarity">
    <text evidence="4">Belongs to the PPP1R35 family.</text>
</comment>
<name>PPR35_DANRE</name>
<organism>
    <name type="scientific">Danio rerio</name>
    <name type="common">Zebrafish</name>
    <name type="synonym">Brachydanio rerio</name>
    <dbReference type="NCBI Taxonomy" id="7955"/>
    <lineage>
        <taxon>Eukaryota</taxon>
        <taxon>Metazoa</taxon>
        <taxon>Chordata</taxon>
        <taxon>Craniata</taxon>
        <taxon>Vertebrata</taxon>
        <taxon>Euteleostomi</taxon>
        <taxon>Actinopterygii</taxon>
        <taxon>Neopterygii</taxon>
        <taxon>Teleostei</taxon>
        <taxon>Ostariophysi</taxon>
        <taxon>Cypriniformes</taxon>
        <taxon>Danionidae</taxon>
        <taxon>Danioninae</taxon>
        <taxon>Danio</taxon>
    </lineage>
</organism>
<protein>
    <recommendedName>
        <fullName evidence="1">Protein phosphatase 1 regulatory subunit 35</fullName>
    </recommendedName>
</protein>
<dbReference type="EMBL" id="BC122312">
    <property type="protein sequence ID" value="AAI22313.1"/>
    <property type="molecule type" value="mRNA"/>
</dbReference>
<dbReference type="RefSeq" id="NP_001038856.1">
    <property type="nucleotide sequence ID" value="NM_001045391.1"/>
</dbReference>
<dbReference type="SMR" id="Q0P427"/>
<dbReference type="FunCoup" id="Q0P427">
    <property type="interactions" value="1201"/>
</dbReference>
<dbReference type="STRING" id="7955.ENSDARP00000059871"/>
<dbReference type="PaxDb" id="7955-ENSDARP00000059871"/>
<dbReference type="GeneID" id="751676"/>
<dbReference type="KEGG" id="dre:751676"/>
<dbReference type="AGR" id="ZFIN:ZDB-GENE-060825-232"/>
<dbReference type="CTD" id="221908"/>
<dbReference type="ZFIN" id="ZDB-GENE-060825-232">
    <property type="gene designation" value="ppp1r35"/>
</dbReference>
<dbReference type="eggNOG" id="ENOG502S5MS">
    <property type="taxonomic scope" value="Eukaryota"/>
</dbReference>
<dbReference type="InParanoid" id="Q0P427"/>
<dbReference type="OrthoDB" id="8942190at2759"/>
<dbReference type="PhylomeDB" id="Q0P427"/>
<dbReference type="PRO" id="PR:Q0P427"/>
<dbReference type="Proteomes" id="UP000000437">
    <property type="component" value="Chromosome 20"/>
</dbReference>
<dbReference type="GO" id="GO:0005814">
    <property type="term" value="C:centriole"/>
    <property type="evidence" value="ECO:0000250"/>
    <property type="project" value="UniProtKB"/>
</dbReference>
<dbReference type="GO" id="GO:0005813">
    <property type="term" value="C:centrosome"/>
    <property type="evidence" value="ECO:0000250"/>
    <property type="project" value="UniProtKB"/>
</dbReference>
<dbReference type="GO" id="GO:0005737">
    <property type="term" value="C:cytoplasm"/>
    <property type="evidence" value="ECO:0007669"/>
    <property type="project" value="UniProtKB-KW"/>
</dbReference>
<dbReference type="GO" id="GO:0019902">
    <property type="term" value="F:phosphatase binding"/>
    <property type="evidence" value="ECO:0007669"/>
    <property type="project" value="InterPro"/>
</dbReference>
<dbReference type="GO" id="GO:0004864">
    <property type="term" value="F:protein phosphatase inhibitor activity"/>
    <property type="evidence" value="ECO:0007669"/>
    <property type="project" value="UniProtKB-KW"/>
</dbReference>
<dbReference type="GO" id="GO:0048570">
    <property type="term" value="P:notochord morphogenesis"/>
    <property type="evidence" value="ECO:0000250"/>
    <property type="project" value="UniProtKB"/>
</dbReference>
<dbReference type="GO" id="GO:1903724">
    <property type="term" value="P:positive regulation of centriole elongation"/>
    <property type="evidence" value="ECO:0000250"/>
    <property type="project" value="UniProtKB"/>
</dbReference>
<dbReference type="GO" id="GO:0045724">
    <property type="term" value="P:positive regulation of cilium assembly"/>
    <property type="evidence" value="ECO:0000250"/>
    <property type="project" value="UniProtKB"/>
</dbReference>
<dbReference type="InterPro" id="IPR033590">
    <property type="entry name" value="PPP1R35"/>
</dbReference>
<dbReference type="InterPro" id="IPR029135">
    <property type="entry name" value="PPP1R35_C"/>
</dbReference>
<dbReference type="PANTHER" id="PTHR28625">
    <property type="entry name" value="PROTEIN PHOSPHATASE 1 REGULATORY SUBUNIT 35"/>
    <property type="match status" value="1"/>
</dbReference>
<dbReference type="PANTHER" id="PTHR28625:SF1">
    <property type="entry name" value="PROTEIN PHOSPHATASE 1 REGULATORY SUBUNIT 35"/>
    <property type="match status" value="1"/>
</dbReference>
<dbReference type="Pfam" id="PF15503">
    <property type="entry name" value="PPP1R35_C"/>
    <property type="match status" value="1"/>
</dbReference>
<sequence>MEVCGEPLIRAAPEPLRDERIQTAELLCADLDLSVSLTPERPADRRRRQVRFNVDPVLITVNPEPRNNQPTARKPPNKDEHGVETDREQSRECDGQQTHEAELNTTLALRAELEEEAEQTFDAEKAVREKLQSSTLTKNHVNSKAAEGLNFPRSQQLYRALVSVSLSRDQLISQALQDRPALAPPTASQNNKFSSPPPEGPDILQFYSPDKMLRETPLLPGDHIPLPRPRPVPRPAHTTFHLHRLHKLWES</sequence>
<feature type="chain" id="PRO_0000358930" description="Protein phosphatase 1 regulatory subunit 35">
    <location>
        <begin position="1"/>
        <end position="251"/>
    </location>
</feature>
<feature type="region of interest" description="Disordered" evidence="3">
    <location>
        <begin position="58"/>
        <end position="99"/>
    </location>
</feature>
<feature type="region of interest" description="Disordered" evidence="3">
    <location>
        <begin position="180"/>
        <end position="235"/>
    </location>
</feature>
<feature type="compositionally biased region" description="Basic and acidic residues" evidence="3">
    <location>
        <begin position="76"/>
        <end position="99"/>
    </location>
</feature>
<gene>
    <name evidence="1" type="primary">ppp1r35</name>
    <name type="ORF">zgc:153512</name>
</gene>
<proteinExistence type="evidence at transcript level"/>